<sequence length="121" mass="12913">MLTKKEQRLRRSRQTRIRIAQQGVARLTVNRTNLHIYANVISDDGSKVLASASTAEAEVRQSLGAAGKGGNAAAARIIGLRIAEKAKAAGIQKVAFDRAGFAYHGRVKALADAAREAGLQF</sequence>
<accession>A1WKA0</accession>
<dbReference type="EMBL" id="CP000542">
    <property type="protein sequence ID" value="ABM58057.1"/>
    <property type="molecule type" value="Genomic_DNA"/>
</dbReference>
<dbReference type="RefSeq" id="WP_011810060.1">
    <property type="nucleotide sequence ID" value="NC_008786.1"/>
</dbReference>
<dbReference type="SMR" id="A1WKA0"/>
<dbReference type="STRING" id="391735.Veis_2309"/>
<dbReference type="GeneID" id="76460874"/>
<dbReference type="KEGG" id="vei:Veis_2309"/>
<dbReference type="eggNOG" id="COG0256">
    <property type="taxonomic scope" value="Bacteria"/>
</dbReference>
<dbReference type="HOGENOM" id="CLU_098841_0_1_4"/>
<dbReference type="OrthoDB" id="9810939at2"/>
<dbReference type="Proteomes" id="UP000000374">
    <property type="component" value="Chromosome"/>
</dbReference>
<dbReference type="GO" id="GO:0022625">
    <property type="term" value="C:cytosolic large ribosomal subunit"/>
    <property type="evidence" value="ECO:0007669"/>
    <property type="project" value="TreeGrafter"/>
</dbReference>
<dbReference type="GO" id="GO:0008097">
    <property type="term" value="F:5S rRNA binding"/>
    <property type="evidence" value="ECO:0007669"/>
    <property type="project" value="TreeGrafter"/>
</dbReference>
<dbReference type="GO" id="GO:0003735">
    <property type="term" value="F:structural constituent of ribosome"/>
    <property type="evidence" value="ECO:0007669"/>
    <property type="project" value="InterPro"/>
</dbReference>
<dbReference type="GO" id="GO:0006412">
    <property type="term" value="P:translation"/>
    <property type="evidence" value="ECO:0007669"/>
    <property type="project" value="UniProtKB-UniRule"/>
</dbReference>
<dbReference type="CDD" id="cd00432">
    <property type="entry name" value="Ribosomal_L18_L5e"/>
    <property type="match status" value="1"/>
</dbReference>
<dbReference type="FunFam" id="3.30.420.100:FF:000001">
    <property type="entry name" value="50S ribosomal protein L18"/>
    <property type="match status" value="1"/>
</dbReference>
<dbReference type="Gene3D" id="3.30.420.100">
    <property type="match status" value="1"/>
</dbReference>
<dbReference type="HAMAP" id="MF_01337_B">
    <property type="entry name" value="Ribosomal_uL18_B"/>
    <property type="match status" value="1"/>
</dbReference>
<dbReference type="InterPro" id="IPR004389">
    <property type="entry name" value="Ribosomal_uL18_bac-type"/>
</dbReference>
<dbReference type="InterPro" id="IPR005484">
    <property type="entry name" value="Ribosomal_uL18_bac/euk"/>
</dbReference>
<dbReference type="NCBIfam" id="TIGR00060">
    <property type="entry name" value="L18_bact"/>
    <property type="match status" value="1"/>
</dbReference>
<dbReference type="PANTHER" id="PTHR12899">
    <property type="entry name" value="39S RIBOSOMAL PROTEIN L18, MITOCHONDRIAL"/>
    <property type="match status" value="1"/>
</dbReference>
<dbReference type="PANTHER" id="PTHR12899:SF3">
    <property type="entry name" value="LARGE RIBOSOMAL SUBUNIT PROTEIN UL18M"/>
    <property type="match status" value="1"/>
</dbReference>
<dbReference type="Pfam" id="PF00861">
    <property type="entry name" value="Ribosomal_L18p"/>
    <property type="match status" value="1"/>
</dbReference>
<dbReference type="SUPFAM" id="SSF53137">
    <property type="entry name" value="Translational machinery components"/>
    <property type="match status" value="1"/>
</dbReference>
<protein>
    <recommendedName>
        <fullName evidence="1">Large ribosomal subunit protein uL18</fullName>
    </recommendedName>
    <alternativeName>
        <fullName evidence="2">50S ribosomal protein L18</fullName>
    </alternativeName>
</protein>
<proteinExistence type="inferred from homology"/>
<name>RL18_VEREI</name>
<organism>
    <name type="scientific">Verminephrobacter eiseniae (strain EF01-2)</name>
    <dbReference type="NCBI Taxonomy" id="391735"/>
    <lineage>
        <taxon>Bacteria</taxon>
        <taxon>Pseudomonadati</taxon>
        <taxon>Pseudomonadota</taxon>
        <taxon>Betaproteobacteria</taxon>
        <taxon>Burkholderiales</taxon>
        <taxon>Comamonadaceae</taxon>
        <taxon>Verminephrobacter</taxon>
    </lineage>
</organism>
<comment type="function">
    <text evidence="1">This is one of the proteins that bind and probably mediate the attachment of the 5S RNA into the large ribosomal subunit, where it forms part of the central protuberance.</text>
</comment>
<comment type="subunit">
    <text evidence="1">Part of the 50S ribosomal subunit; part of the 5S rRNA/L5/L18/L25 subcomplex. Contacts the 5S and 23S rRNAs.</text>
</comment>
<comment type="similarity">
    <text evidence="1">Belongs to the universal ribosomal protein uL18 family.</text>
</comment>
<reference key="1">
    <citation type="submission" date="2006-12" db="EMBL/GenBank/DDBJ databases">
        <title>Complete sequence of chromosome 1 of Verminephrobacter eiseniae EF01-2.</title>
        <authorList>
            <person name="Copeland A."/>
            <person name="Lucas S."/>
            <person name="Lapidus A."/>
            <person name="Barry K."/>
            <person name="Detter J.C."/>
            <person name="Glavina del Rio T."/>
            <person name="Dalin E."/>
            <person name="Tice H."/>
            <person name="Pitluck S."/>
            <person name="Chertkov O."/>
            <person name="Brettin T."/>
            <person name="Bruce D."/>
            <person name="Han C."/>
            <person name="Tapia R."/>
            <person name="Gilna P."/>
            <person name="Schmutz J."/>
            <person name="Larimer F."/>
            <person name="Land M."/>
            <person name="Hauser L."/>
            <person name="Kyrpides N."/>
            <person name="Kim E."/>
            <person name="Stahl D."/>
            <person name="Richardson P."/>
        </authorList>
    </citation>
    <scope>NUCLEOTIDE SEQUENCE [LARGE SCALE GENOMIC DNA]</scope>
    <source>
        <strain>EF01-2</strain>
    </source>
</reference>
<gene>
    <name evidence="1" type="primary">rplR</name>
    <name type="ordered locus">Veis_2309</name>
</gene>
<evidence type="ECO:0000255" key="1">
    <source>
        <dbReference type="HAMAP-Rule" id="MF_01337"/>
    </source>
</evidence>
<evidence type="ECO:0000305" key="2"/>
<feature type="chain" id="PRO_1000053136" description="Large ribosomal subunit protein uL18">
    <location>
        <begin position="1"/>
        <end position="121"/>
    </location>
</feature>
<keyword id="KW-1185">Reference proteome</keyword>
<keyword id="KW-0687">Ribonucleoprotein</keyword>
<keyword id="KW-0689">Ribosomal protein</keyword>
<keyword id="KW-0694">RNA-binding</keyword>
<keyword id="KW-0699">rRNA-binding</keyword>